<evidence type="ECO:0000255" key="1">
    <source>
        <dbReference type="HAMAP-Rule" id="MF_01569"/>
    </source>
</evidence>
<feature type="chain" id="PRO_0000248687" description="Proline--tRNA ligase">
    <location>
        <begin position="1"/>
        <end position="574"/>
    </location>
</feature>
<accession>Q72CD8</accession>
<name>SYP_NITV2</name>
<organism>
    <name type="scientific">Nitratidesulfovibrio vulgaris (strain ATCC 29579 / DSM 644 / CCUG 34227 / NCIMB 8303 / VKM B-1760 / Hildenborough)</name>
    <name type="common">Desulfovibrio vulgaris</name>
    <dbReference type="NCBI Taxonomy" id="882"/>
    <lineage>
        <taxon>Bacteria</taxon>
        <taxon>Pseudomonadati</taxon>
        <taxon>Thermodesulfobacteriota</taxon>
        <taxon>Desulfovibrionia</taxon>
        <taxon>Desulfovibrionales</taxon>
        <taxon>Desulfovibrionaceae</taxon>
        <taxon>Nitratidesulfovibrio</taxon>
    </lineage>
</organism>
<gene>
    <name evidence="1" type="primary">proS</name>
    <name type="ordered locus">DVU_1345</name>
</gene>
<reference key="1">
    <citation type="journal article" date="2004" name="Nat. Biotechnol.">
        <title>The genome sequence of the anaerobic, sulfate-reducing bacterium Desulfovibrio vulgaris Hildenborough.</title>
        <authorList>
            <person name="Heidelberg J.F."/>
            <person name="Seshadri R."/>
            <person name="Haveman S.A."/>
            <person name="Hemme C.L."/>
            <person name="Paulsen I.T."/>
            <person name="Kolonay J.F."/>
            <person name="Eisen J.A."/>
            <person name="Ward N.L."/>
            <person name="Methe B.A."/>
            <person name="Brinkac L.M."/>
            <person name="Daugherty S.C."/>
            <person name="DeBoy R.T."/>
            <person name="Dodson R.J."/>
            <person name="Durkin A.S."/>
            <person name="Madupu R."/>
            <person name="Nelson W.C."/>
            <person name="Sullivan S.A."/>
            <person name="Fouts D.E."/>
            <person name="Haft D.H."/>
            <person name="Selengut J."/>
            <person name="Peterson J.D."/>
            <person name="Davidsen T.M."/>
            <person name="Zafar N."/>
            <person name="Zhou L."/>
            <person name="Radune D."/>
            <person name="Dimitrov G."/>
            <person name="Hance M."/>
            <person name="Tran K."/>
            <person name="Khouri H.M."/>
            <person name="Gill J."/>
            <person name="Utterback T.R."/>
            <person name="Feldblyum T.V."/>
            <person name="Wall J.D."/>
            <person name="Voordouw G."/>
            <person name="Fraser C.M."/>
        </authorList>
    </citation>
    <scope>NUCLEOTIDE SEQUENCE [LARGE SCALE GENOMIC DNA]</scope>
    <source>
        <strain>ATCC 29579 / DSM 644 / CCUG 34227 / NCIMB 8303 / VKM B-1760 / Hildenborough</strain>
    </source>
</reference>
<protein>
    <recommendedName>
        <fullName evidence="1">Proline--tRNA ligase</fullName>
        <ecNumber evidence="1">6.1.1.15</ecNumber>
    </recommendedName>
    <alternativeName>
        <fullName evidence="1">Prolyl-tRNA synthetase</fullName>
        <shortName evidence="1">ProRS</shortName>
    </alternativeName>
</protein>
<sequence>MRWSRCYIPTLKEAPSDAEVVSHKLLVRAGMIRKLTSGIYTFMPMGLRALNKVAAIVREEMNRAGAQEVLMPMVQPADLWQETGRWEFYGKELLRFRDRNDRDYCLGPTHEEVITDLVRGEVRSYRQLPINLYQIQTKFRDEIRPRFGLMRGREFVMKDAYSFDRDQSGCDESYKAMYAAYQRIFSRLGLRFRAVEADSGSIGGSFSHEFMVLADTGEDTLAVCTACEYAANVERAEVTGTPCTRPAAAALAEVPTPGAHTIEEVSAFLGVPADMLVKTLLFVADGEPVAALVRGDRELNEVKLKNLLGADSLELATPEQVEAWTGAPVGFAGPVGLHGVKRVFADTELKGDAGWIVGANKADTHLREVSLTRDAAIEAYADLRMITASDPCPRCGGAVELPKGIEVGHVFKLGLKYSKSMNATFLDENGKEQVMVMGCYGIGVSRVVASCIEQNNDGDGIVFPPPIAPYEVALLLLDPKNEEAAAKAAEIESFLEAEGHDVLLDDRDERPGVKFKDADLIGSPYQLVLGGKGLARGVVEAKNRRSGEKTELPVEGFAEAFRDWRAGVLKGWGL</sequence>
<comment type="function">
    <text evidence="1">Catalyzes the attachment of proline to tRNA(Pro) in a two-step reaction: proline is first activated by ATP to form Pro-AMP and then transferred to the acceptor end of tRNA(Pro). As ProRS can inadvertently accommodate and process non-cognate amino acids such as alanine and cysteine, to avoid such errors it has two additional distinct editing activities against alanine. One activity is designated as 'pretransfer' editing and involves the tRNA(Pro)-independent hydrolysis of activated Ala-AMP. The other activity is designated 'posttransfer' editing and involves deacylation of mischarged Ala-tRNA(Pro). The misacylated Cys-tRNA(Pro) is not edited by ProRS.</text>
</comment>
<comment type="catalytic activity">
    <reaction evidence="1">
        <text>tRNA(Pro) + L-proline + ATP = L-prolyl-tRNA(Pro) + AMP + diphosphate</text>
        <dbReference type="Rhea" id="RHEA:14305"/>
        <dbReference type="Rhea" id="RHEA-COMP:9700"/>
        <dbReference type="Rhea" id="RHEA-COMP:9702"/>
        <dbReference type="ChEBI" id="CHEBI:30616"/>
        <dbReference type="ChEBI" id="CHEBI:33019"/>
        <dbReference type="ChEBI" id="CHEBI:60039"/>
        <dbReference type="ChEBI" id="CHEBI:78442"/>
        <dbReference type="ChEBI" id="CHEBI:78532"/>
        <dbReference type="ChEBI" id="CHEBI:456215"/>
        <dbReference type="EC" id="6.1.1.15"/>
    </reaction>
</comment>
<comment type="subunit">
    <text evidence="1">Homodimer.</text>
</comment>
<comment type="subcellular location">
    <subcellularLocation>
        <location evidence="1">Cytoplasm</location>
    </subcellularLocation>
</comment>
<comment type="domain">
    <text evidence="1">Consists of three domains: the N-terminal catalytic domain, the editing domain and the C-terminal anticodon-binding domain.</text>
</comment>
<comment type="similarity">
    <text evidence="1">Belongs to the class-II aminoacyl-tRNA synthetase family. ProS type 1 subfamily.</text>
</comment>
<keyword id="KW-0030">Aminoacyl-tRNA synthetase</keyword>
<keyword id="KW-0067">ATP-binding</keyword>
<keyword id="KW-0963">Cytoplasm</keyword>
<keyword id="KW-0436">Ligase</keyword>
<keyword id="KW-0547">Nucleotide-binding</keyword>
<keyword id="KW-0648">Protein biosynthesis</keyword>
<keyword id="KW-1185">Reference proteome</keyword>
<proteinExistence type="inferred from homology"/>
<dbReference type="EC" id="6.1.1.15" evidence="1"/>
<dbReference type="EMBL" id="AE017285">
    <property type="protein sequence ID" value="AAS95823.1"/>
    <property type="molecule type" value="Genomic_DNA"/>
</dbReference>
<dbReference type="RefSeq" id="WP_010938640.1">
    <property type="nucleotide sequence ID" value="NC_002937.3"/>
</dbReference>
<dbReference type="RefSeq" id="YP_010564.1">
    <property type="nucleotide sequence ID" value="NC_002937.3"/>
</dbReference>
<dbReference type="SMR" id="Q72CD8"/>
<dbReference type="STRING" id="882.DVU_1345"/>
<dbReference type="PaxDb" id="882-DVU_1345"/>
<dbReference type="EnsemblBacteria" id="AAS95823">
    <property type="protein sequence ID" value="AAS95823"/>
    <property type="gene ID" value="DVU_1345"/>
</dbReference>
<dbReference type="KEGG" id="dvu:DVU_1345"/>
<dbReference type="PATRIC" id="fig|882.5.peg.1257"/>
<dbReference type="eggNOG" id="COG0442">
    <property type="taxonomic scope" value="Bacteria"/>
</dbReference>
<dbReference type="HOGENOM" id="CLU_016739_0_0_7"/>
<dbReference type="OrthoDB" id="9809052at2"/>
<dbReference type="PhylomeDB" id="Q72CD8"/>
<dbReference type="Proteomes" id="UP000002194">
    <property type="component" value="Chromosome"/>
</dbReference>
<dbReference type="GO" id="GO:0005829">
    <property type="term" value="C:cytosol"/>
    <property type="evidence" value="ECO:0007669"/>
    <property type="project" value="TreeGrafter"/>
</dbReference>
<dbReference type="GO" id="GO:0002161">
    <property type="term" value="F:aminoacyl-tRNA deacylase activity"/>
    <property type="evidence" value="ECO:0007669"/>
    <property type="project" value="InterPro"/>
</dbReference>
<dbReference type="GO" id="GO:0005524">
    <property type="term" value="F:ATP binding"/>
    <property type="evidence" value="ECO:0007669"/>
    <property type="project" value="UniProtKB-UniRule"/>
</dbReference>
<dbReference type="GO" id="GO:0004827">
    <property type="term" value="F:proline-tRNA ligase activity"/>
    <property type="evidence" value="ECO:0007669"/>
    <property type="project" value="UniProtKB-UniRule"/>
</dbReference>
<dbReference type="GO" id="GO:0006433">
    <property type="term" value="P:prolyl-tRNA aminoacylation"/>
    <property type="evidence" value="ECO:0007669"/>
    <property type="project" value="UniProtKB-UniRule"/>
</dbReference>
<dbReference type="CDD" id="cd04334">
    <property type="entry name" value="ProRS-INS"/>
    <property type="match status" value="1"/>
</dbReference>
<dbReference type="CDD" id="cd00861">
    <property type="entry name" value="ProRS_anticodon_short"/>
    <property type="match status" value="1"/>
</dbReference>
<dbReference type="CDD" id="cd00779">
    <property type="entry name" value="ProRS_core_prok"/>
    <property type="match status" value="1"/>
</dbReference>
<dbReference type="FunFam" id="3.30.930.10:FF:000012">
    <property type="entry name" value="Proline--tRNA ligase"/>
    <property type="match status" value="1"/>
</dbReference>
<dbReference type="FunFam" id="3.30.930.10:FF:000065">
    <property type="entry name" value="Proline--tRNA ligase"/>
    <property type="match status" value="1"/>
</dbReference>
<dbReference type="Gene3D" id="3.40.50.800">
    <property type="entry name" value="Anticodon-binding domain"/>
    <property type="match status" value="1"/>
</dbReference>
<dbReference type="Gene3D" id="3.30.930.10">
    <property type="entry name" value="Bira Bifunctional Protein, Domain 2"/>
    <property type="match status" value="2"/>
</dbReference>
<dbReference type="Gene3D" id="3.90.960.10">
    <property type="entry name" value="YbaK/aminoacyl-tRNA synthetase-associated domain"/>
    <property type="match status" value="1"/>
</dbReference>
<dbReference type="HAMAP" id="MF_01569">
    <property type="entry name" value="Pro_tRNA_synth_type1"/>
    <property type="match status" value="1"/>
</dbReference>
<dbReference type="InterPro" id="IPR002314">
    <property type="entry name" value="aa-tRNA-synt_IIb"/>
</dbReference>
<dbReference type="InterPro" id="IPR006195">
    <property type="entry name" value="aa-tRNA-synth_II"/>
</dbReference>
<dbReference type="InterPro" id="IPR045864">
    <property type="entry name" value="aa-tRNA-synth_II/BPL/LPL"/>
</dbReference>
<dbReference type="InterPro" id="IPR004154">
    <property type="entry name" value="Anticodon-bd"/>
</dbReference>
<dbReference type="InterPro" id="IPR036621">
    <property type="entry name" value="Anticodon-bd_dom_sf"/>
</dbReference>
<dbReference type="InterPro" id="IPR002316">
    <property type="entry name" value="Pro-tRNA-ligase_IIa"/>
</dbReference>
<dbReference type="InterPro" id="IPR004500">
    <property type="entry name" value="Pro-tRNA-synth_IIa_bac-type"/>
</dbReference>
<dbReference type="InterPro" id="IPR023717">
    <property type="entry name" value="Pro-tRNA-Synthase_IIa_type1"/>
</dbReference>
<dbReference type="InterPro" id="IPR050062">
    <property type="entry name" value="Pro-tRNA_synthetase"/>
</dbReference>
<dbReference type="InterPro" id="IPR044140">
    <property type="entry name" value="ProRS_anticodon_short"/>
</dbReference>
<dbReference type="InterPro" id="IPR033730">
    <property type="entry name" value="ProRS_core_prok"/>
</dbReference>
<dbReference type="InterPro" id="IPR036754">
    <property type="entry name" value="YbaK/aa-tRNA-synt-asso_dom_sf"/>
</dbReference>
<dbReference type="InterPro" id="IPR007214">
    <property type="entry name" value="YbaK/aa-tRNA-synth-assoc-dom"/>
</dbReference>
<dbReference type="NCBIfam" id="NF006625">
    <property type="entry name" value="PRK09194.1"/>
    <property type="match status" value="1"/>
</dbReference>
<dbReference type="NCBIfam" id="TIGR00409">
    <property type="entry name" value="proS_fam_II"/>
    <property type="match status" value="1"/>
</dbReference>
<dbReference type="PANTHER" id="PTHR42753">
    <property type="entry name" value="MITOCHONDRIAL RIBOSOME PROTEIN L39/PROLYL-TRNA LIGASE FAMILY MEMBER"/>
    <property type="match status" value="1"/>
</dbReference>
<dbReference type="PANTHER" id="PTHR42753:SF2">
    <property type="entry name" value="PROLINE--TRNA LIGASE"/>
    <property type="match status" value="1"/>
</dbReference>
<dbReference type="Pfam" id="PF03129">
    <property type="entry name" value="HGTP_anticodon"/>
    <property type="match status" value="1"/>
</dbReference>
<dbReference type="Pfam" id="PF00587">
    <property type="entry name" value="tRNA-synt_2b"/>
    <property type="match status" value="1"/>
</dbReference>
<dbReference type="Pfam" id="PF04073">
    <property type="entry name" value="tRNA_edit"/>
    <property type="match status" value="1"/>
</dbReference>
<dbReference type="PIRSF" id="PIRSF001535">
    <property type="entry name" value="ProRS_1"/>
    <property type="match status" value="1"/>
</dbReference>
<dbReference type="PRINTS" id="PR01046">
    <property type="entry name" value="TRNASYNTHPRO"/>
</dbReference>
<dbReference type="SUPFAM" id="SSF52954">
    <property type="entry name" value="Class II aaRS ABD-related"/>
    <property type="match status" value="1"/>
</dbReference>
<dbReference type="SUPFAM" id="SSF55681">
    <property type="entry name" value="Class II aaRS and biotin synthetases"/>
    <property type="match status" value="1"/>
</dbReference>
<dbReference type="SUPFAM" id="SSF55826">
    <property type="entry name" value="YbaK/ProRS associated domain"/>
    <property type="match status" value="1"/>
</dbReference>
<dbReference type="PROSITE" id="PS50862">
    <property type="entry name" value="AA_TRNA_LIGASE_II"/>
    <property type="match status" value="1"/>
</dbReference>